<feature type="chain" id="PRO_0000415506" description="Uncharacterized oxidoreductase Rv1144">
    <location>
        <begin position="1"/>
        <end position="250"/>
    </location>
</feature>
<feature type="active site" description="Proton acceptor" evidence="3">
    <location>
        <position position="156"/>
    </location>
</feature>
<feature type="binding site" evidence="2">
    <location>
        <position position="15"/>
    </location>
    <ligand>
        <name>NAD(+)</name>
        <dbReference type="ChEBI" id="CHEBI:57540"/>
    </ligand>
</feature>
<feature type="binding site" evidence="2">
    <location>
        <position position="17"/>
    </location>
    <ligand>
        <name>NAD(+)</name>
        <dbReference type="ChEBI" id="CHEBI:57540"/>
    </ligand>
</feature>
<feature type="binding site" evidence="2">
    <location>
        <position position="36"/>
    </location>
    <ligand>
        <name>NAD(+)</name>
        <dbReference type="ChEBI" id="CHEBI:57540"/>
    </ligand>
</feature>
<feature type="binding site" evidence="2">
    <location>
        <position position="56"/>
    </location>
    <ligand>
        <name>NAD(+)</name>
        <dbReference type="ChEBI" id="CHEBI:57540"/>
    </ligand>
</feature>
<feature type="binding site" evidence="2">
    <location>
        <position position="57"/>
    </location>
    <ligand>
        <name>NAD(+)</name>
        <dbReference type="ChEBI" id="CHEBI:57540"/>
    </ligand>
</feature>
<feature type="binding site" evidence="2">
    <location>
        <position position="82"/>
    </location>
    <ligand>
        <name>NAD(+)</name>
        <dbReference type="ChEBI" id="CHEBI:57540"/>
    </ligand>
</feature>
<feature type="binding site" evidence="1">
    <location>
        <position position="143"/>
    </location>
    <ligand>
        <name>substrate</name>
    </ligand>
</feature>
<feature type="binding site" evidence="2">
    <location>
        <position position="156"/>
    </location>
    <ligand>
        <name>NAD(+)</name>
        <dbReference type="ChEBI" id="CHEBI:57540"/>
    </ligand>
</feature>
<feature type="binding site" evidence="2">
    <location>
        <position position="160"/>
    </location>
    <ligand>
        <name>NAD(+)</name>
        <dbReference type="ChEBI" id="CHEBI:57540"/>
    </ligand>
</feature>
<feature type="binding site" evidence="2">
    <location>
        <position position="189"/>
    </location>
    <ligand>
        <name>NAD(+)</name>
        <dbReference type="ChEBI" id="CHEBI:57540"/>
    </ligand>
</feature>
<feature type="binding site" evidence="2">
    <location>
        <position position="191"/>
    </location>
    <ligand>
        <name>NAD(+)</name>
        <dbReference type="ChEBI" id="CHEBI:57540"/>
    </ligand>
</feature>
<feature type="turn" evidence="5">
    <location>
        <begin position="1"/>
        <end position="5"/>
    </location>
</feature>
<feature type="strand" evidence="5">
    <location>
        <begin position="7"/>
        <end position="11"/>
    </location>
</feature>
<feature type="turn" evidence="5">
    <location>
        <begin position="12"/>
        <end position="14"/>
    </location>
</feature>
<feature type="helix" evidence="5">
    <location>
        <begin position="16"/>
        <end position="27"/>
    </location>
</feature>
<feature type="strand" evidence="5">
    <location>
        <begin position="31"/>
        <end position="38"/>
    </location>
</feature>
<feature type="helix" evidence="5">
    <location>
        <begin position="40"/>
        <end position="44"/>
    </location>
</feature>
<feature type="strand" evidence="5">
    <location>
        <begin position="50"/>
        <end position="54"/>
    </location>
</feature>
<feature type="helix" evidence="5">
    <location>
        <begin position="60"/>
        <end position="73"/>
    </location>
</feature>
<feature type="strand" evidence="5">
    <location>
        <begin position="76"/>
        <end position="81"/>
    </location>
</feature>
<feature type="strand" evidence="5">
    <location>
        <begin position="91"/>
        <end position="93"/>
    </location>
</feature>
<feature type="helix" evidence="5">
    <location>
        <begin position="100"/>
        <end position="110"/>
    </location>
</feature>
<feature type="helix" evidence="5">
    <location>
        <begin position="112"/>
        <end position="126"/>
    </location>
</feature>
<feature type="strand" evidence="5">
    <location>
        <begin position="136"/>
        <end position="141"/>
    </location>
</feature>
<feature type="helix" evidence="5">
    <location>
        <begin position="145"/>
        <end position="148"/>
    </location>
</feature>
<feature type="helix" evidence="5">
    <location>
        <begin position="154"/>
        <end position="174"/>
    </location>
</feature>
<feature type="helix" evidence="5">
    <location>
        <begin position="175"/>
        <end position="177"/>
    </location>
</feature>
<feature type="strand" evidence="5">
    <location>
        <begin position="179"/>
        <end position="186"/>
    </location>
</feature>
<feature type="helix" evidence="5">
    <location>
        <begin position="192"/>
        <end position="194"/>
    </location>
</feature>
<feature type="helix" evidence="5">
    <location>
        <begin position="202"/>
        <end position="207"/>
    </location>
</feature>
<feature type="strand" evidence="5">
    <location>
        <begin position="209"/>
        <end position="212"/>
    </location>
</feature>
<feature type="helix" evidence="5">
    <location>
        <begin position="218"/>
        <end position="230"/>
    </location>
</feature>
<feature type="strand" evidence="5">
    <location>
        <begin position="238"/>
        <end position="242"/>
    </location>
</feature>
<protein>
    <recommendedName>
        <fullName>Uncharacterized oxidoreductase Rv1144</fullName>
        <ecNumber>1.-.-.-</ecNumber>
    </recommendedName>
</protein>
<sequence length="250" mass="25788">MKTKDAVAVVTGGASGLGLATTKRLLDAGAQVVVVDLRGDDVVGGLGDRARFAQADVTDEAAVSNALELADSLGPVRVVVNCAGTGNAIRVLSRDGVFPLAAFRKIVDINLVGTFNVLRLGAERIAKTEPIGEERGVIINTASVAAFDGQIGQAAYSASKGGVVGMTLPIARDLASKLIRVVTIAPGLFDTPLLASLPAEAKASLGQQVPHPSRLGNPDEYGALVLHIIENPMLNGEVIRLDGAIRMAPR</sequence>
<organism>
    <name type="scientific">Mycobacterium tuberculosis (strain ATCC 25618 / H37Rv)</name>
    <dbReference type="NCBI Taxonomy" id="83332"/>
    <lineage>
        <taxon>Bacteria</taxon>
        <taxon>Bacillati</taxon>
        <taxon>Actinomycetota</taxon>
        <taxon>Actinomycetes</taxon>
        <taxon>Mycobacteriales</taxon>
        <taxon>Mycobacteriaceae</taxon>
        <taxon>Mycobacterium</taxon>
        <taxon>Mycobacterium tuberculosis complex</taxon>
    </lineage>
</organism>
<gene>
    <name type="ordered locus">Rv1144</name>
</gene>
<reference key="1">
    <citation type="journal article" date="1998" name="Nature">
        <title>Deciphering the biology of Mycobacterium tuberculosis from the complete genome sequence.</title>
        <authorList>
            <person name="Cole S.T."/>
            <person name="Brosch R."/>
            <person name="Parkhill J."/>
            <person name="Garnier T."/>
            <person name="Churcher C.M."/>
            <person name="Harris D.E."/>
            <person name="Gordon S.V."/>
            <person name="Eiglmeier K."/>
            <person name="Gas S."/>
            <person name="Barry C.E. III"/>
            <person name="Tekaia F."/>
            <person name="Badcock K."/>
            <person name="Basham D."/>
            <person name="Brown D."/>
            <person name="Chillingworth T."/>
            <person name="Connor R."/>
            <person name="Davies R.M."/>
            <person name="Devlin K."/>
            <person name="Feltwell T."/>
            <person name="Gentles S."/>
            <person name="Hamlin N."/>
            <person name="Holroyd S."/>
            <person name="Hornsby T."/>
            <person name="Jagels K."/>
            <person name="Krogh A."/>
            <person name="McLean J."/>
            <person name="Moule S."/>
            <person name="Murphy L.D."/>
            <person name="Oliver S."/>
            <person name="Osborne J."/>
            <person name="Quail M.A."/>
            <person name="Rajandream M.A."/>
            <person name="Rogers J."/>
            <person name="Rutter S."/>
            <person name="Seeger K."/>
            <person name="Skelton S."/>
            <person name="Squares S."/>
            <person name="Squares R."/>
            <person name="Sulston J.E."/>
            <person name="Taylor K."/>
            <person name="Whitehead S."/>
            <person name="Barrell B.G."/>
        </authorList>
    </citation>
    <scope>NUCLEOTIDE SEQUENCE [LARGE SCALE GENOMIC DNA]</scope>
    <source>
        <strain>ATCC 25618 / H37Rv</strain>
    </source>
</reference>
<reference key="2">
    <citation type="journal article" date="2011" name="Mol. Cell. Proteomics">
        <title>Proteogenomic analysis of Mycobacterium tuberculosis by high resolution mass spectrometry.</title>
        <authorList>
            <person name="Kelkar D.S."/>
            <person name="Kumar D."/>
            <person name="Kumar P."/>
            <person name="Balakrishnan L."/>
            <person name="Muthusamy B."/>
            <person name="Yadav A.K."/>
            <person name="Shrivastava P."/>
            <person name="Marimuthu A."/>
            <person name="Anand S."/>
            <person name="Sundaram H."/>
            <person name="Kingsbury R."/>
            <person name="Harsha H.C."/>
            <person name="Nair B."/>
            <person name="Prasad T.S."/>
            <person name="Chauhan D.S."/>
            <person name="Katoch K."/>
            <person name="Katoch V.M."/>
            <person name="Kumar P."/>
            <person name="Chaerkady R."/>
            <person name="Ramachandran S."/>
            <person name="Dash D."/>
            <person name="Pandey A."/>
        </authorList>
    </citation>
    <scope>IDENTIFICATION BY MASS SPECTROMETRY [LARGE SCALE ANALYSIS]</scope>
    <source>
        <strain>ATCC 25618 / H37Rv</strain>
    </source>
</reference>
<accession>P9WGQ7</accession>
<accession>L0T7F6</accession>
<accession>O06544</accession>
<accession>Q7D8R8</accession>
<name>Y1144_MYCTU</name>
<keyword id="KW-0002">3D-structure</keyword>
<keyword id="KW-0560">Oxidoreductase</keyword>
<keyword id="KW-1185">Reference proteome</keyword>
<comment type="similarity">
    <text evidence="4">Belongs to the short-chain dehydrogenases/reductases (SDR) family.</text>
</comment>
<dbReference type="EC" id="1.-.-.-"/>
<dbReference type="EMBL" id="AL123456">
    <property type="protein sequence ID" value="CCP43899.1"/>
    <property type="molecule type" value="Genomic_DNA"/>
</dbReference>
<dbReference type="PIR" id="A70554">
    <property type="entry name" value="A70554"/>
</dbReference>
<dbReference type="RefSeq" id="NP_215660.1">
    <property type="nucleotide sequence ID" value="NC_000962.3"/>
</dbReference>
<dbReference type="RefSeq" id="WP_003405961.1">
    <property type="nucleotide sequence ID" value="NZ_NVQJ01000021.1"/>
</dbReference>
<dbReference type="PDB" id="6UJK">
    <property type="method" value="X-ray"/>
    <property type="resolution" value="1.20 A"/>
    <property type="chains" value="A/B=1-250"/>
</dbReference>
<dbReference type="PDBsum" id="6UJK"/>
<dbReference type="SMR" id="P9WGQ7"/>
<dbReference type="FunCoup" id="P9WGQ7">
    <property type="interactions" value="257"/>
</dbReference>
<dbReference type="STRING" id="83332.Rv1144"/>
<dbReference type="PaxDb" id="83332-Rv1144"/>
<dbReference type="DNASU" id="885932"/>
<dbReference type="GeneID" id="885932"/>
<dbReference type="KEGG" id="mtu:Rv1144"/>
<dbReference type="KEGG" id="mtv:RVBD_1144"/>
<dbReference type="TubercuList" id="Rv1144"/>
<dbReference type="eggNOG" id="COG1028">
    <property type="taxonomic scope" value="Bacteria"/>
</dbReference>
<dbReference type="InParanoid" id="P9WGQ7"/>
<dbReference type="OrthoDB" id="9795647at2"/>
<dbReference type="PhylomeDB" id="P9WGQ7"/>
<dbReference type="Proteomes" id="UP000001584">
    <property type="component" value="Chromosome"/>
</dbReference>
<dbReference type="GO" id="GO:0009274">
    <property type="term" value="C:peptidoglycan-based cell wall"/>
    <property type="evidence" value="ECO:0007005"/>
    <property type="project" value="MTBBASE"/>
</dbReference>
<dbReference type="GO" id="GO:0005886">
    <property type="term" value="C:plasma membrane"/>
    <property type="evidence" value="ECO:0007005"/>
    <property type="project" value="MTBBASE"/>
</dbReference>
<dbReference type="GO" id="GO:0016491">
    <property type="term" value="F:oxidoreductase activity"/>
    <property type="evidence" value="ECO:0007669"/>
    <property type="project" value="UniProtKB-KW"/>
</dbReference>
<dbReference type="CDD" id="cd05371">
    <property type="entry name" value="HSD10-like_SDR_c"/>
    <property type="match status" value="1"/>
</dbReference>
<dbReference type="FunFam" id="3.40.50.720:FF:000215">
    <property type="entry name" value="3-hydroxyacyl-CoA dehydrogenase type-2"/>
    <property type="match status" value="1"/>
</dbReference>
<dbReference type="Gene3D" id="3.40.50.720">
    <property type="entry name" value="NAD(P)-binding Rossmann-like Domain"/>
    <property type="match status" value="1"/>
</dbReference>
<dbReference type="InterPro" id="IPR036291">
    <property type="entry name" value="NAD(P)-bd_dom_sf"/>
</dbReference>
<dbReference type="InterPro" id="IPR020904">
    <property type="entry name" value="Sc_DH/Rdtase_CS"/>
</dbReference>
<dbReference type="InterPro" id="IPR002347">
    <property type="entry name" value="SDR_fam"/>
</dbReference>
<dbReference type="PANTHER" id="PTHR43658:SF8">
    <property type="entry name" value="17-BETA-HYDROXYSTEROID DEHYDROGENASE 14-RELATED"/>
    <property type="match status" value="1"/>
</dbReference>
<dbReference type="PANTHER" id="PTHR43658">
    <property type="entry name" value="SHORT-CHAIN DEHYDROGENASE/REDUCTASE"/>
    <property type="match status" value="1"/>
</dbReference>
<dbReference type="Pfam" id="PF00106">
    <property type="entry name" value="adh_short"/>
    <property type="match status" value="1"/>
</dbReference>
<dbReference type="PRINTS" id="PR00081">
    <property type="entry name" value="GDHRDH"/>
</dbReference>
<dbReference type="PRINTS" id="PR00080">
    <property type="entry name" value="SDRFAMILY"/>
</dbReference>
<dbReference type="SUPFAM" id="SSF51735">
    <property type="entry name" value="NAD(P)-binding Rossmann-fold domains"/>
    <property type="match status" value="1"/>
</dbReference>
<dbReference type="PROSITE" id="PS00061">
    <property type="entry name" value="ADH_SHORT"/>
    <property type="match status" value="1"/>
</dbReference>
<evidence type="ECO:0000250" key="1"/>
<evidence type="ECO:0000250" key="2">
    <source>
        <dbReference type="UniProtKB" id="Q99714"/>
    </source>
</evidence>
<evidence type="ECO:0000255" key="3">
    <source>
        <dbReference type="PROSITE-ProRule" id="PRU10001"/>
    </source>
</evidence>
<evidence type="ECO:0000305" key="4"/>
<evidence type="ECO:0007829" key="5">
    <source>
        <dbReference type="PDB" id="6UJK"/>
    </source>
</evidence>
<proteinExistence type="evidence at protein level"/>